<comment type="function">
    <text evidence="1">Catalyzes the formation of putrescine from agmatine.</text>
</comment>
<comment type="catalytic activity">
    <reaction evidence="1">
        <text>agmatine + H2O = urea + putrescine</text>
        <dbReference type="Rhea" id="RHEA:13929"/>
        <dbReference type="ChEBI" id="CHEBI:15377"/>
        <dbReference type="ChEBI" id="CHEBI:16199"/>
        <dbReference type="ChEBI" id="CHEBI:58145"/>
        <dbReference type="ChEBI" id="CHEBI:326268"/>
        <dbReference type="EC" id="3.5.3.11"/>
    </reaction>
</comment>
<comment type="cofactor">
    <cofactor evidence="1">
        <name>Mn(2+)</name>
        <dbReference type="ChEBI" id="CHEBI:29035"/>
    </cofactor>
</comment>
<comment type="pathway">
    <text evidence="1">Amine and polyamine biosynthesis; putrescine biosynthesis via agmatine pathway; putrescine from agmatine: step 1/1.</text>
</comment>
<comment type="similarity">
    <text evidence="1">Belongs to the arginase family. Agmatinase subfamily.</text>
</comment>
<feature type="chain" id="PRO_1000145619" description="Agmatinase">
    <location>
        <begin position="1"/>
        <end position="306"/>
    </location>
</feature>
<feature type="binding site" evidence="1">
    <location>
        <position position="126"/>
    </location>
    <ligand>
        <name>Mn(2+)</name>
        <dbReference type="ChEBI" id="CHEBI:29035"/>
    </ligand>
</feature>
<feature type="binding site" evidence="1">
    <location>
        <position position="149"/>
    </location>
    <ligand>
        <name>Mn(2+)</name>
        <dbReference type="ChEBI" id="CHEBI:29035"/>
    </ligand>
</feature>
<feature type="binding site" evidence="1">
    <location>
        <position position="151"/>
    </location>
    <ligand>
        <name>Mn(2+)</name>
        <dbReference type="ChEBI" id="CHEBI:29035"/>
    </ligand>
</feature>
<feature type="binding site" evidence="1">
    <location>
        <position position="153"/>
    </location>
    <ligand>
        <name>Mn(2+)</name>
        <dbReference type="ChEBI" id="CHEBI:29035"/>
    </ligand>
</feature>
<feature type="binding site" evidence="1">
    <location>
        <position position="230"/>
    </location>
    <ligand>
        <name>Mn(2+)</name>
        <dbReference type="ChEBI" id="CHEBI:29035"/>
    </ligand>
</feature>
<feature type="binding site" evidence="1">
    <location>
        <position position="232"/>
    </location>
    <ligand>
        <name>Mn(2+)</name>
        <dbReference type="ChEBI" id="CHEBI:29035"/>
    </ligand>
</feature>
<keyword id="KW-0378">Hydrolase</keyword>
<keyword id="KW-0464">Manganese</keyword>
<keyword id="KW-0479">Metal-binding</keyword>
<keyword id="KW-0620">Polyamine biosynthesis</keyword>
<keyword id="KW-0661">Putrescine biosynthesis</keyword>
<keyword id="KW-0745">Spermidine biosynthesis</keyword>
<name>SPEB_SALA4</name>
<protein>
    <recommendedName>
        <fullName evidence="1">Agmatinase</fullName>
        <ecNumber evidence="1">3.5.3.11</ecNumber>
    </recommendedName>
    <alternativeName>
        <fullName evidence="1">Agmatine ureohydrolase</fullName>
        <shortName evidence="1">AUH</shortName>
    </alternativeName>
</protein>
<gene>
    <name evidence="1" type="primary">speB</name>
    <name type="ordered locus">SeAg_B3240</name>
</gene>
<proteinExistence type="inferred from homology"/>
<accession>B5F5K3</accession>
<evidence type="ECO:0000255" key="1">
    <source>
        <dbReference type="HAMAP-Rule" id="MF_01418"/>
    </source>
</evidence>
<organism>
    <name type="scientific">Salmonella agona (strain SL483)</name>
    <dbReference type="NCBI Taxonomy" id="454166"/>
    <lineage>
        <taxon>Bacteria</taxon>
        <taxon>Pseudomonadati</taxon>
        <taxon>Pseudomonadota</taxon>
        <taxon>Gammaproteobacteria</taxon>
        <taxon>Enterobacterales</taxon>
        <taxon>Enterobacteriaceae</taxon>
        <taxon>Salmonella</taxon>
    </lineage>
</organism>
<sequence>MSTLGHQYDNSLVSNAFGFLRLPMNFQPYDSDADWVITGVPFDMATSGRAGGRHGPAAIRQVSTNLAWEHHRFPWNFDMRERLNVVDCGDLVYAFGDAREMSEKLQAHAEKLLSAGKRMLSFGGDHFVTLPLLRAHAKHFGKMALVHFDAHTDTYANGCEFDHGTMFYTAPKEGLIDPHHSVQIGIRTEFDKDNGFTVLDACQVNDRGVDDILAQVKQIVGDMPVYLTFDIDCLDPAFAPGTGTPVIGGLTSDRAIKLVRGLKDLNIVGMDVVEVAPAYDQSEITALAAATLALEMLYIQAAKKGE</sequence>
<reference key="1">
    <citation type="journal article" date="2011" name="J. Bacteriol.">
        <title>Comparative genomics of 28 Salmonella enterica isolates: evidence for CRISPR-mediated adaptive sublineage evolution.</title>
        <authorList>
            <person name="Fricke W.F."/>
            <person name="Mammel M.K."/>
            <person name="McDermott P.F."/>
            <person name="Tartera C."/>
            <person name="White D.G."/>
            <person name="Leclerc J.E."/>
            <person name="Ravel J."/>
            <person name="Cebula T.A."/>
        </authorList>
    </citation>
    <scope>NUCLEOTIDE SEQUENCE [LARGE SCALE GENOMIC DNA]</scope>
    <source>
        <strain>SL483</strain>
    </source>
</reference>
<dbReference type="EC" id="3.5.3.11" evidence="1"/>
<dbReference type="EMBL" id="CP001138">
    <property type="protein sequence ID" value="ACH50852.1"/>
    <property type="molecule type" value="Genomic_DNA"/>
</dbReference>
<dbReference type="RefSeq" id="WP_000105550.1">
    <property type="nucleotide sequence ID" value="NC_011149.1"/>
</dbReference>
<dbReference type="SMR" id="B5F5K3"/>
<dbReference type="KEGG" id="sea:SeAg_B3240"/>
<dbReference type="HOGENOM" id="CLU_039478_0_0_6"/>
<dbReference type="UniPathway" id="UPA00534">
    <property type="reaction ID" value="UER00287"/>
</dbReference>
<dbReference type="Proteomes" id="UP000008819">
    <property type="component" value="Chromosome"/>
</dbReference>
<dbReference type="GO" id="GO:0008783">
    <property type="term" value="F:agmatinase activity"/>
    <property type="evidence" value="ECO:0007669"/>
    <property type="project" value="UniProtKB-UniRule"/>
</dbReference>
<dbReference type="GO" id="GO:0030145">
    <property type="term" value="F:manganese ion binding"/>
    <property type="evidence" value="ECO:0007669"/>
    <property type="project" value="InterPro"/>
</dbReference>
<dbReference type="GO" id="GO:0033389">
    <property type="term" value="P:putrescine biosynthetic process from arginine, via agmatine"/>
    <property type="evidence" value="ECO:0007669"/>
    <property type="project" value="TreeGrafter"/>
</dbReference>
<dbReference type="GO" id="GO:0008295">
    <property type="term" value="P:spermidine biosynthetic process"/>
    <property type="evidence" value="ECO:0007669"/>
    <property type="project" value="UniProtKB-UniRule"/>
</dbReference>
<dbReference type="CDD" id="cd11592">
    <property type="entry name" value="Agmatinase_PAH"/>
    <property type="match status" value="1"/>
</dbReference>
<dbReference type="FunFam" id="3.40.800.10:FF:000001">
    <property type="entry name" value="Agmatinase"/>
    <property type="match status" value="1"/>
</dbReference>
<dbReference type="Gene3D" id="3.40.800.10">
    <property type="entry name" value="Ureohydrolase domain"/>
    <property type="match status" value="1"/>
</dbReference>
<dbReference type="HAMAP" id="MF_01418">
    <property type="entry name" value="SpeB"/>
    <property type="match status" value="1"/>
</dbReference>
<dbReference type="InterPro" id="IPR023694">
    <property type="entry name" value="Agmatinase"/>
</dbReference>
<dbReference type="InterPro" id="IPR005925">
    <property type="entry name" value="Agmatinase-rel"/>
</dbReference>
<dbReference type="InterPro" id="IPR006035">
    <property type="entry name" value="Ureohydrolase"/>
</dbReference>
<dbReference type="InterPro" id="IPR023696">
    <property type="entry name" value="Ureohydrolase_dom_sf"/>
</dbReference>
<dbReference type="InterPro" id="IPR020855">
    <property type="entry name" value="Ureohydrolase_Mn_BS"/>
</dbReference>
<dbReference type="NCBIfam" id="TIGR01230">
    <property type="entry name" value="agmatinase"/>
    <property type="match status" value="1"/>
</dbReference>
<dbReference type="NCBIfam" id="NF002564">
    <property type="entry name" value="PRK02190.1"/>
    <property type="match status" value="1"/>
</dbReference>
<dbReference type="PANTHER" id="PTHR11358">
    <property type="entry name" value="ARGINASE/AGMATINASE"/>
    <property type="match status" value="1"/>
</dbReference>
<dbReference type="PANTHER" id="PTHR11358:SF26">
    <property type="entry name" value="GUANIDINO ACID HYDROLASE, MITOCHONDRIAL"/>
    <property type="match status" value="1"/>
</dbReference>
<dbReference type="Pfam" id="PF00491">
    <property type="entry name" value="Arginase"/>
    <property type="match status" value="1"/>
</dbReference>
<dbReference type="PIRSF" id="PIRSF036979">
    <property type="entry name" value="Arginase"/>
    <property type="match status" value="1"/>
</dbReference>
<dbReference type="SUPFAM" id="SSF52768">
    <property type="entry name" value="Arginase/deacetylase"/>
    <property type="match status" value="1"/>
</dbReference>
<dbReference type="PROSITE" id="PS01053">
    <property type="entry name" value="ARGINASE_1"/>
    <property type="match status" value="1"/>
</dbReference>
<dbReference type="PROSITE" id="PS51409">
    <property type="entry name" value="ARGINASE_2"/>
    <property type="match status" value="1"/>
</dbReference>